<name>SMG_ECO57</name>
<evidence type="ECO:0000255" key="1">
    <source>
        <dbReference type="HAMAP-Rule" id="MF_00598"/>
    </source>
</evidence>
<sequence>MFDVLMYLFETYIHTEAELRVDQDKLEQDLTDAGFDREDIYNALLWLEKLADYQEGLAEPMQLASDPLSMRIYTPEECERLDASCRGFLLFLEQIQVLNLETREMVIERVLALDTAEFDLEDLKWVILMVLFNIPGCENAYQQMEELLFEVNEGMLH</sequence>
<comment type="similarity">
    <text evidence="1">Belongs to the Smg family.</text>
</comment>
<feature type="chain" id="PRO_0000209169" description="Protein Smg">
    <location>
        <begin position="1"/>
        <end position="157"/>
    </location>
</feature>
<organism>
    <name type="scientific">Escherichia coli O157:H7</name>
    <dbReference type="NCBI Taxonomy" id="83334"/>
    <lineage>
        <taxon>Bacteria</taxon>
        <taxon>Pseudomonadati</taxon>
        <taxon>Pseudomonadota</taxon>
        <taxon>Gammaproteobacteria</taxon>
        <taxon>Enterobacterales</taxon>
        <taxon>Enterobacteriaceae</taxon>
        <taxon>Escherichia</taxon>
    </lineage>
</organism>
<reference key="1">
    <citation type="journal article" date="2001" name="Nature">
        <title>Genome sequence of enterohaemorrhagic Escherichia coli O157:H7.</title>
        <authorList>
            <person name="Perna N.T."/>
            <person name="Plunkett G. III"/>
            <person name="Burland V."/>
            <person name="Mau B."/>
            <person name="Glasner J.D."/>
            <person name="Rose D.J."/>
            <person name="Mayhew G.F."/>
            <person name="Evans P.S."/>
            <person name="Gregor J."/>
            <person name="Kirkpatrick H.A."/>
            <person name="Posfai G."/>
            <person name="Hackett J."/>
            <person name="Klink S."/>
            <person name="Boutin A."/>
            <person name="Shao Y."/>
            <person name="Miller L."/>
            <person name="Grotbeck E.J."/>
            <person name="Davis N.W."/>
            <person name="Lim A."/>
            <person name="Dimalanta E.T."/>
            <person name="Potamousis K."/>
            <person name="Apodaca J."/>
            <person name="Anantharaman T.S."/>
            <person name="Lin J."/>
            <person name="Yen G."/>
            <person name="Schwartz D.C."/>
            <person name="Welch R.A."/>
            <person name="Blattner F.R."/>
        </authorList>
    </citation>
    <scope>NUCLEOTIDE SEQUENCE [LARGE SCALE GENOMIC DNA]</scope>
    <source>
        <strain>O157:H7 / EDL933 / ATCC 700927 / EHEC</strain>
    </source>
</reference>
<reference key="2">
    <citation type="journal article" date="2001" name="DNA Res.">
        <title>Complete genome sequence of enterohemorrhagic Escherichia coli O157:H7 and genomic comparison with a laboratory strain K-12.</title>
        <authorList>
            <person name="Hayashi T."/>
            <person name="Makino K."/>
            <person name="Ohnishi M."/>
            <person name="Kurokawa K."/>
            <person name="Ishii K."/>
            <person name="Yokoyama K."/>
            <person name="Han C.-G."/>
            <person name="Ohtsubo E."/>
            <person name="Nakayama K."/>
            <person name="Murata T."/>
            <person name="Tanaka M."/>
            <person name="Tobe T."/>
            <person name="Iida T."/>
            <person name="Takami H."/>
            <person name="Honda T."/>
            <person name="Sasakawa C."/>
            <person name="Ogasawara N."/>
            <person name="Yasunaga T."/>
            <person name="Kuhara S."/>
            <person name="Shiba T."/>
            <person name="Hattori M."/>
            <person name="Shinagawa H."/>
        </authorList>
    </citation>
    <scope>NUCLEOTIDE SEQUENCE [LARGE SCALE GENOMIC DNA]</scope>
    <source>
        <strain>O157:H7 / Sakai / RIMD 0509952 / EHEC</strain>
    </source>
</reference>
<accession>Q8X8F6</accession>
<protein>
    <recommendedName>
        <fullName evidence="1">Protein Smg</fullName>
    </recommendedName>
</protein>
<proteinExistence type="inferred from homology"/>
<dbReference type="EMBL" id="AE005174">
    <property type="protein sequence ID" value="AAG58406.1"/>
    <property type="molecule type" value="Genomic_DNA"/>
</dbReference>
<dbReference type="EMBL" id="BA000007">
    <property type="protein sequence ID" value="BAB37573.1"/>
    <property type="molecule type" value="Genomic_DNA"/>
</dbReference>
<dbReference type="PIR" id="B85993">
    <property type="entry name" value="B85993"/>
</dbReference>
<dbReference type="PIR" id="F91147">
    <property type="entry name" value="F91147"/>
</dbReference>
<dbReference type="RefSeq" id="NP_312177.1">
    <property type="nucleotide sequence ID" value="NC_002695.1"/>
</dbReference>
<dbReference type="RefSeq" id="WP_000460672.1">
    <property type="nucleotide sequence ID" value="NZ_VOAI01000078.1"/>
</dbReference>
<dbReference type="SMR" id="Q8X8F6"/>
<dbReference type="STRING" id="155864.Z4655"/>
<dbReference type="GeneID" id="86948148"/>
<dbReference type="GeneID" id="915995"/>
<dbReference type="KEGG" id="ece:Z4655"/>
<dbReference type="KEGG" id="ecs:ECs_4150"/>
<dbReference type="PATRIC" id="fig|386585.9.peg.4333"/>
<dbReference type="eggNOG" id="COG2922">
    <property type="taxonomic scope" value="Bacteria"/>
</dbReference>
<dbReference type="HOGENOM" id="CLU_133242_0_0_6"/>
<dbReference type="OMA" id="DLKWVVM"/>
<dbReference type="Proteomes" id="UP000000558">
    <property type="component" value="Chromosome"/>
</dbReference>
<dbReference type="Proteomes" id="UP000002519">
    <property type="component" value="Chromosome"/>
</dbReference>
<dbReference type="HAMAP" id="MF_00598">
    <property type="entry name" value="Smg"/>
    <property type="match status" value="1"/>
</dbReference>
<dbReference type="InterPro" id="IPR007456">
    <property type="entry name" value="Smg"/>
</dbReference>
<dbReference type="NCBIfam" id="NF002897">
    <property type="entry name" value="PRK03430.1"/>
    <property type="match status" value="1"/>
</dbReference>
<dbReference type="PANTHER" id="PTHR38692">
    <property type="entry name" value="PROTEIN SMG"/>
    <property type="match status" value="1"/>
</dbReference>
<dbReference type="PANTHER" id="PTHR38692:SF1">
    <property type="entry name" value="PROTEIN SMG"/>
    <property type="match status" value="1"/>
</dbReference>
<dbReference type="Pfam" id="PF04361">
    <property type="entry name" value="DUF494"/>
    <property type="match status" value="1"/>
</dbReference>
<keyword id="KW-1185">Reference proteome</keyword>
<gene>
    <name evidence="1" type="primary">smg</name>
    <name type="ordered locus">Z4655</name>
    <name type="ordered locus">ECs4150</name>
</gene>